<keyword id="KW-0131">Cell cycle</keyword>
<keyword id="KW-0132">Cell division</keyword>
<evidence type="ECO:0000255" key="1">
    <source>
        <dbReference type="HAMAP-Rule" id="MF_00262"/>
    </source>
</evidence>
<reference key="1">
    <citation type="submission" date="2007-12" db="EMBL/GenBank/DDBJ databases">
        <title>Brucella suis ATCC 23445 whole genome shotgun sequencing project.</title>
        <authorList>
            <person name="Setubal J.C."/>
            <person name="Bowns C."/>
            <person name="Boyle S."/>
            <person name="Crasta O.R."/>
            <person name="Czar M.J."/>
            <person name="Dharmanolla C."/>
            <person name="Gillespie J.J."/>
            <person name="Kenyon R.W."/>
            <person name="Lu J."/>
            <person name="Mane S."/>
            <person name="Mohapatra S."/>
            <person name="Nagrani S."/>
            <person name="Purkayastha A."/>
            <person name="Rajasimha H.K."/>
            <person name="Shallom J.M."/>
            <person name="Shallom S."/>
            <person name="Shukla M."/>
            <person name="Snyder E.E."/>
            <person name="Sobral B.W."/>
            <person name="Wattam A.R."/>
            <person name="Will R."/>
            <person name="Williams K."/>
            <person name="Yoo H."/>
            <person name="Bruce D."/>
            <person name="Detter C."/>
            <person name="Munk C."/>
            <person name="Brettin T.S."/>
        </authorList>
    </citation>
    <scope>NUCLEOTIDE SEQUENCE [LARGE SCALE GENOMIC DNA]</scope>
    <source>
        <strain>ATCC 23445 / NCTC 10510</strain>
    </source>
</reference>
<proteinExistence type="inferred from homology"/>
<name>MINE_BRUSI</name>
<protein>
    <recommendedName>
        <fullName evidence="1">Cell division topological specificity factor</fullName>
    </recommendedName>
</protein>
<comment type="function">
    <text evidence="1">Prevents the cell division inhibition by proteins MinC and MinD at internal division sites while permitting inhibition at polar sites. This ensures cell division at the proper site by restricting the formation of a division septum at the midpoint of the long axis of the cell.</text>
</comment>
<comment type="similarity">
    <text evidence="1">Belongs to the MinE family.</text>
</comment>
<dbReference type="EMBL" id="CP000912">
    <property type="protein sequence ID" value="ABY39336.1"/>
    <property type="molecule type" value="Genomic_DNA"/>
</dbReference>
<dbReference type="RefSeq" id="WP_002966267.1">
    <property type="nucleotide sequence ID" value="NC_010167.1"/>
</dbReference>
<dbReference type="SMR" id="A9WY20"/>
<dbReference type="GeneID" id="97535514"/>
<dbReference type="KEGG" id="bmt:BSUIS_B0328"/>
<dbReference type="HOGENOM" id="CLU_137929_2_0_5"/>
<dbReference type="Proteomes" id="UP000008545">
    <property type="component" value="Chromosome II"/>
</dbReference>
<dbReference type="GO" id="GO:0051301">
    <property type="term" value="P:cell division"/>
    <property type="evidence" value="ECO:0007669"/>
    <property type="project" value="UniProtKB-KW"/>
</dbReference>
<dbReference type="GO" id="GO:0032955">
    <property type="term" value="P:regulation of division septum assembly"/>
    <property type="evidence" value="ECO:0007669"/>
    <property type="project" value="InterPro"/>
</dbReference>
<dbReference type="Gene3D" id="3.30.1070.10">
    <property type="entry name" value="Cell division topological specificity factor MinE"/>
    <property type="match status" value="1"/>
</dbReference>
<dbReference type="HAMAP" id="MF_00262">
    <property type="entry name" value="MinE"/>
    <property type="match status" value="1"/>
</dbReference>
<dbReference type="InterPro" id="IPR005527">
    <property type="entry name" value="MinE"/>
</dbReference>
<dbReference type="InterPro" id="IPR036707">
    <property type="entry name" value="MinE_sf"/>
</dbReference>
<dbReference type="NCBIfam" id="TIGR01215">
    <property type="entry name" value="minE"/>
    <property type="match status" value="1"/>
</dbReference>
<dbReference type="NCBIfam" id="NF001422">
    <property type="entry name" value="PRK00296.1"/>
    <property type="match status" value="1"/>
</dbReference>
<dbReference type="Pfam" id="PF03776">
    <property type="entry name" value="MinE"/>
    <property type="match status" value="1"/>
</dbReference>
<dbReference type="SUPFAM" id="SSF55229">
    <property type="entry name" value="Cell division protein MinE topological specificity domain"/>
    <property type="match status" value="1"/>
</dbReference>
<sequence length="90" mass="10089">MSIFRFFTRQQASAPQARERLQVLLAHERASYGGQSDLVAVLREEILAVIAKHIKVDREKVSVKMDRGDQVSTLEVDIELPLTAKKGRAA</sequence>
<gene>
    <name evidence="1" type="primary">minE</name>
    <name type="ordered locus">BSUIS_B0328</name>
</gene>
<accession>A9WY20</accession>
<feature type="chain" id="PRO_1000078631" description="Cell division topological specificity factor">
    <location>
        <begin position="1"/>
        <end position="90"/>
    </location>
</feature>
<organism>
    <name type="scientific">Brucella suis (strain ATCC 23445 / NCTC 10510)</name>
    <dbReference type="NCBI Taxonomy" id="470137"/>
    <lineage>
        <taxon>Bacteria</taxon>
        <taxon>Pseudomonadati</taxon>
        <taxon>Pseudomonadota</taxon>
        <taxon>Alphaproteobacteria</taxon>
        <taxon>Hyphomicrobiales</taxon>
        <taxon>Brucellaceae</taxon>
        <taxon>Brucella/Ochrobactrum group</taxon>
        <taxon>Brucella</taxon>
    </lineage>
</organism>